<reference key="1">
    <citation type="journal article" date="2001" name="Science">
        <title>Comparative genomics of Listeria species.</title>
        <authorList>
            <person name="Glaser P."/>
            <person name="Frangeul L."/>
            <person name="Buchrieser C."/>
            <person name="Rusniok C."/>
            <person name="Amend A."/>
            <person name="Baquero F."/>
            <person name="Berche P."/>
            <person name="Bloecker H."/>
            <person name="Brandt P."/>
            <person name="Chakraborty T."/>
            <person name="Charbit A."/>
            <person name="Chetouani F."/>
            <person name="Couve E."/>
            <person name="de Daruvar A."/>
            <person name="Dehoux P."/>
            <person name="Domann E."/>
            <person name="Dominguez-Bernal G."/>
            <person name="Duchaud E."/>
            <person name="Durant L."/>
            <person name="Dussurget O."/>
            <person name="Entian K.-D."/>
            <person name="Fsihi H."/>
            <person name="Garcia-del Portillo F."/>
            <person name="Garrido P."/>
            <person name="Gautier L."/>
            <person name="Goebel W."/>
            <person name="Gomez-Lopez N."/>
            <person name="Hain T."/>
            <person name="Hauf J."/>
            <person name="Jackson D."/>
            <person name="Jones L.-M."/>
            <person name="Kaerst U."/>
            <person name="Kreft J."/>
            <person name="Kuhn M."/>
            <person name="Kunst F."/>
            <person name="Kurapkat G."/>
            <person name="Madueno E."/>
            <person name="Maitournam A."/>
            <person name="Mata Vicente J."/>
            <person name="Ng E."/>
            <person name="Nedjari H."/>
            <person name="Nordsiek G."/>
            <person name="Novella S."/>
            <person name="de Pablos B."/>
            <person name="Perez-Diaz J.-C."/>
            <person name="Purcell R."/>
            <person name="Remmel B."/>
            <person name="Rose M."/>
            <person name="Schlueter T."/>
            <person name="Simoes N."/>
            <person name="Tierrez A."/>
            <person name="Vazquez-Boland J.-A."/>
            <person name="Voss H."/>
            <person name="Wehland J."/>
            <person name="Cossart P."/>
        </authorList>
    </citation>
    <scope>NUCLEOTIDE SEQUENCE [LARGE SCALE GENOMIC DNA]</scope>
    <source>
        <strain>ATCC BAA-680 / CLIP 11262</strain>
    </source>
</reference>
<reference key="2">
    <citation type="journal article" date="2012" name="J. Bacteriol.">
        <title>Novel listerial glycerol dehydrogenase- and phosphoenolpyruvate-dependent dihydroxyacetone kinase system connected to the pentose phosphate pathway.</title>
        <authorList>
            <person name="Monniot C."/>
            <person name="Zebre A.C."/>
            <person name="Ake F.M."/>
            <person name="Deutscher J."/>
            <person name="Milohanic E."/>
        </authorList>
    </citation>
    <scope>FUNCTION</scope>
    <scope>DISRUPTION PHENOTYPE</scope>
    <source>
        <strain>ATCC BAA-680 / CLIP 11262</strain>
    </source>
</reference>
<evidence type="ECO:0000255" key="1">
    <source>
        <dbReference type="PROSITE-ProRule" id="PRU00349"/>
    </source>
</evidence>
<evidence type="ECO:0000269" key="2">
    <source>
    </source>
</evidence>
<evidence type="ECO:0000303" key="3">
    <source>
    </source>
</evidence>
<evidence type="ECO:0000312" key="4">
    <source>
        <dbReference type="EMBL" id="CAC95603.1"/>
    </source>
</evidence>
<feature type="chain" id="PRO_0000439494" description="HTH-type transcriptional regulator GolR">
    <location>
        <begin position="1"/>
        <end position="254"/>
    </location>
</feature>
<feature type="domain" description="HTH deoR-type" evidence="1">
    <location>
        <begin position="3"/>
        <end position="58"/>
    </location>
</feature>
<feature type="DNA-binding region" description="H-T-H motif" evidence="1">
    <location>
        <begin position="20"/>
        <end position="39"/>
    </location>
</feature>
<protein>
    <recommendedName>
        <fullName evidence="3">HTH-type transcriptional regulator GolR</fullName>
    </recommendedName>
</protein>
<accession>Q92ET8</accession>
<proteinExistence type="predicted"/>
<gene>
    <name evidence="3" type="primary">golR</name>
    <name evidence="4" type="ordered locus">lin0370</name>
</gene>
<name>GOLR_LISIN</name>
<keyword id="KW-0238">DNA-binding</keyword>
<keyword id="KW-0319">Glycerol metabolism</keyword>
<keyword id="KW-0678">Repressor</keyword>
<keyword id="KW-0804">Transcription</keyword>
<keyword id="KW-0805">Transcription regulation</keyword>
<dbReference type="EMBL" id="AL596164">
    <property type="protein sequence ID" value="CAC95603.1"/>
    <property type="molecule type" value="Genomic_DNA"/>
</dbReference>
<dbReference type="PIR" id="AC1479">
    <property type="entry name" value="AC1479"/>
</dbReference>
<dbReference type="RefSeq" id="WP_003765236.1">
    <property type="nucleotide sequence ID" value="NC_003212.1"/>
</dbReference>
<dbReference type="SMR" id="Q92ET8"/>
<dbReference type="STRING" id="272626.gene:17564697"/>
<dbReference type="KEGG" id="lin:lin0370"/>
<dbReference type="eggNOG" id="COG1349">
    <property type="taxonomic scope" value="Bacteria"/>
</dbReference>
<dbReference type="HOGENOM" id="CLU_060699_1_4_9"/>
<dbReference type="OrthoDB" id="9797223at2"/>
<dbReference type="Proteomes" id="UP000002513">
    <property type="component" value="Chromosome"/>
</dbReference>
<dbReference type="GO" id="GO:0003677">
    <property type="term" value="F:DNA binding"/>
    <property type="evidence" value="ECO:0007669"/>
    <property type="project" value="UniProtKB-KW"/>
</dbReference>
<dbReference type="GO" id="GO:0003700">
    <property type="term" value="F:DNA-binding transcription factor activity"/>
    <property type="evidence" value="ECO:0007669"/>
    <property type="project" value="InterPro"/>
</dbReference>
<dbReference type="GO" id="GO:0019563">
    <property type="term" value="P:glycerol catabolic process"/>
    <property type="evidence" value="ECO:0000314"/>
    <property type="project" value="UniProtKB"/>
</dbReference>
<dbReference type="GO" id="GO:0006355">
    <property type="term" value="P:regulation of DNA-templated transcription"/>
    <property type="evidence" value="ECO:0000314"/>
    <property type="project" value="UniProtKB"/>
</dbReference>
<dbReference type="Gene3D" id="3.40.50.1360">
    <property type="match status" value="1"/>
</dbReference>
<dbReference type="Gene3D" id="1.10.10.10">
    <property type="entry name" value="Winged helix-like DNA-binding domain superfamily/Winged helix DNA-binding domain"/>
    <property type="match status" value="1"/>
</dbReference>
<dbReference type="InterPro" id="IPR050313">
    <property type="entry name" value="Carb_Metab_HTH_regulators"/>
</dbReference>
<dbReference type="InterPro" id="IPR014036">
    <property type="entry name" value="DeoR-like_C"/>
</dbReference>
<dbReference type="InterPro" id="IPR001034">
    <property type="entry name" value="DeoR_HTH"/>
</dbReference>
<dbReference type="InterPro" id="IPR037171">
    <property type="entry name" value="NagB/RpiA_transferase-like"/>
</dbReference>
<dbReference type="InterPro" id="IPR018356">
    <property type="entry name" value="Tscrpt_reg_HTH_DeoR_CS"/>
</dbReference>
<dbReference type="InterPro" id="IPR036388">
    <property type="entry name" value="WH-like_DNA-bd_sf"/>
</dbReference>
<dbReference type="InterPro" id="IPR036390">
    <property type="entry name" value="WH_DNA-bd_sf"/>
</dbReference>
<dbReference type="PANTHER" id="PTHR30363:SF44">
    <property type="entry name" value="AGA OPERON TRANSCRIPTIONAL REPRESSOR-RELATED"/>
    <property type="match status" value="1"/>
</dbReference>
<dbReference type="PANTHER" id="PTHR30363">
    <property type="entry name" value="HTH-TYPE TRANSCRIPTIONAL REGULATOR SRLR-RELATED"/>
    <property type="match status" value="1"/>
</dbReference>
<dbReference type="Pfam" id="PF00455">
    <property type="entry name" value="DeoRC"/>
    <property type="match status" value="1"/>
</dbReference>
<dbReference type="Pfam" id="PF08220">
    <property type="entry name" value="HTH_DeoR"/>
    <property type="match status" value="1"/>
</dbReference>
<dbReference type="PRINTS" id="PR00037">
    <property type="entry name" value="HTHLACR"/>
</dbReference>
<dbReference type="SMART" id="SM01134">
    <property type="entry name" value="DeoRC"/>
    <property type="match status" value="1"/>
</dbReference>
<dbReference type="SMART" id="SM00420">
    <property type="entry name" value="HTH_DEOR"/>
    <property type="match status" value="1"/>
</dbReference>
<dbReference type="SUPFAM" id="SSF100950">
    <property type="entry name" value="NagB/RpiA/CoA transferase-like"/>
    <property type="match status" value="1"/>
</dbReference>
<dbReference type="SUPFAM" id="SSF46785">
    <property type="entry name" value="Winged helix' DNA-binding domain"/>
    <property type="match status" value="1"/>
</dbReference>
<dbReference type="PROSITE" id="PS00894">
    <property type="entry name" value="HTH_DEOR_1"/>
    <property type="match status" value="1"/>
</dbReference>
<dbReference type="PROSITE" id="PS51000">
    <property type="entry name" value="HTH_DEOR_2"/>
    <property type="match status" value="1"/>
</dbReference>
<sequence length="254" mass="28042">MFPFERQNKIIHLLDQNNKITVPELSRILDVSISTIRNDLSALEESGMIKKVHGGAVLLKSEEKFTNFNDRIIRNIEEKEAIAKEAATLVKNNQTIILDASSTALALAKELHGFSRLTVITSGLYTAIELKDNPNISVILTGGIVTTNSFTLEGILGANLIENIHADLCFMSAKGFTMEEGLTDFNIYETELKRLLAKRTNKLVALLDHTKMGVISTASITTAENIDLLITDNKINKALYKKFQDAGLPVKIAE</sequence>
<comment type="function">
    <text evidence="2">Involved in the glycerol metabolism. Repressor of the gol operon for glycerol metabolism.</text>
</comment>
<comment type="disruption phenotype">
    <text evidence="2">Cells lacking this gene show a constitutive but glucose-repressible expression of the entire gol operon.</text>
</comment>
<organism>
    <name type="scientific">Listeria innocua serovar 6a (strain ATCC BAA-680 / CLIP 11262)</name>
    <dbReference type="NCBI Taxonomy" id="272626"/>
    <lineage>
        <taxon>Bacteria</taxon>
        <taxon>Bacillati</taxon>
        <taxon>Bacillota</taxon>
        <taxon>Bacilli</taxon>
        <taxon>Bacillales</taxon>
        <taxon>Listeriaceae</taxon>
        <taxon>Listeria</taxon>
    </lineage>
</organism>